<accession>Q31X58</accession>
<reference key="1">
    <citation type="journal article" date="2005" name="Nucleic Acids Res.">
        <title>Genome dynamics and diversity of Shigella species, the etiologic agents of bacillary dysentery.</title>
        <authorList>
            <person name="Yang F."/>
            <person name="Yang J."/>
            <person name="Zhang X."/>
            <person name="Chen L."/>
            <person name="Jiang Y."/>
            <person name="Yan Y."/>
            <person name="Tang X."/>
            <person name="Wang J."/>
            <person name="Xiong Z."/>
            <person name="Dong J."/>
            <person name="Xue Y."/>
            <person name="Zhu Y."/>
            <person name="Xu X."/>
            <person name="Sun L."/>
            <person name="Chen S."/>
            <person name="Nie H."/>
            <person name="Peng J."/>
            <person name="Xu J."/>
            <person name="Wang Y."/>
            <person name="Yuan Z."/>
            <person name="Wen Y."/>
            <person name="Yao Z."/>
            <person name="Shen Y."/>
            <person name="Qiang B."/>
            <person name="Hou Y."/>
            <person name="Yu J."/>
            <person name="Jin Q."/>
        </authorList>
    </citation>
    <scope>NUCLEOTIDE SEQUENCE [LARGE SCALE GENOMIC DNA]</scope>
    <source>
        <strain>Sb227</strain>
    </source>
</reference>
<evidence type="ECO:0000255" key="1">
    <source>
        <dbReference type="HAMAP-Rule" id="MF_00578"/>
    </source>
</evidence>
<keyword id="KW-0067">ATP-binding</keyword>
<keyword id="KW-0317">Glutathione biosynthesis</keyword>
<keyword id="KW-0436">Ligase</keyword>
<keyword id="KW-0547">Nucleotide-binding</keyword>
<comment type="catalytic activity">
    <reaction evidence="1">
        <text>L-cysteine + L-glutamate + ATP = gamma-L-glutamyl-L-cysteine + ADP + phosphate + H(+)</text>
        <dbReference type="Rhea" id="RHEA:13285"/>
        <dbReference type="ChEBI" id="CHEBI:15378"/>
        <dbReference type="ChEBI" id="CHEBI:29985"/>
        <dbReference type="ChEBI" id="CHEBI:30616"/>
        <dbReference type="ChEBI" id="CHEBI:35235"/>
        <dbReference type="ChEBI" id="CHEBI:43474"/>
        <dbReference type="ChEBI" id="CHEBI:58173"/>
        <dbReference type="ChEBI" id="CHEBI:456216"/>
        <dbReference type="EC" id="6.3.2.2"/>
    </reaction>
</comment>
<comment type="pathway">
    <text evidence="1">Sulfur metabolism; glutathione biosynthesis; glutathione from L-cysteine and L-glutamate: step 1/2.</text>
</comment>
<comment type="similarity">
    <text evidence="1">Belongs to the glutamate--cysteine ligase type 1 family. Type 1 subfamily.</text>
</comment>
<feature type="chain" id="PRO_1000025187" description="Glutamate--cysteine ligase">
    <location>
        <begin position="1"/>
        <end position="518"/>
    </location>
</feature>
<sequence length="518" mass="58389">MIPDVSQALAWLEKHPQALKGIQRGLERETLRVNADGTQATTGHPEALGSALTHKWITTDFAEALLEFITPVDGDIEHMLTFMRDLHRYTARNMGDERMWPLSMPCYIAEGQDIELAQYGTSNTGRFKTLYREGLKNRYGALMQTISGVHYNFSLPMAFWQAKCCDISGTDAKEKISAGYFRVIRNYYRFGWVIPYLFGASPAICSSFLQGKPTSLPFEKTECGMYYLPYATSLRLSDLGYTNKSQSNLGITFNDLYEYVAGLKQAIKTPSEEYAKIGIEKDGKRLQINSNVLQIENELYAPIRPKRVTRSGESPSDALLRGGIEYIEVRSLDINPFSPIGVDEQQVRFLDLFMVWCALADAPEMSSSELACTRVNWNRVILEGRKPGLTLGIGCETAQFPLPQVGKDLFRDLKRVAQTLDSINGGKAYQKVCDELVACFDNPDLTFSARILRSMIDTGIGGTGKAFAEAYRNLLREEPLEILREEDFVAEREASERRQQEMETADTEPFAVWLEKHA</sequence>
<protein>
    <recommendedName>
        <fullName evidence="1">Glutamate--cysteine ligase</fullName>
        <ecNumber evidence="1">6.3.2.2</ecNumber>
    </recommendedName>
    <alternativeName>
        <fullName evidence="1">Gamma-ECS</fullName>
        <shortName evidence="1">GCS</shortName>
    </alternativeName>
    <alternativeName>
        <fullName evidence="1">Gamma-glutamylcysteine synthetase</fullName>
    </alternativeName>
</protein>
<organism>
    <name type="scientific">Shigella boydii serotype 4 (strain Sb227)</name>
    <dbReference type="NCBI Taxonomy" id="300268"/>
    <lineage>
        <taxon>Bacteria</taxon>
        <taxon>Pseudomonadati</taxon>
        <taxon>Pseudomonadota</taxon>
        <taxon>Gammaproteobacteria</taxon>
        <taxon>Enterobacterales</taxon>
        <taxon>Enterobacteriaceae</taxon>
        <taxon>Shigella</taxon>
    </lineage>
</organism>
<dbReference type="EC" id="6.3.2.2" evidence="1"/>
<dbReference type="EMBL" id="CP000036">
    <property type="protein sequence ID" value="ABB67350.1"/>
    <property type="molecule type" value="Genomic_DNA"/>
</dbReference>
<dbReference type="RefSeq" id="WP_000611830.1">
    <property type="nucleotide sequence ID" value="NC_007613.1"/>
</dbReference>
<dbReference type="SMR" id="Q31X58"/>
<dbReference type="KEGG" id="sbo:SBO_2829"/>
<dbReference type="HOGENOM" id="CLU_020728_3_0_6"/>
<dbReference type="UniPathway" id="UPA00142">
    <property type="reaction ID" value="UER00209"/>
</dbReference>
<dbReference type="Proteomes" id="UP000007067">
    <property type="component" value="Chromosome"/>
</dbReference>
<dbReference type="GO" id="GO:0005829">
    <property type="term" value="C:cytosol"/>
    <property type="evidence" value="ECO:0007669"/>
    <property type="project" value="TreeGrafter"/>
</dbReference>
<dbReference type="GO" id="GO:0005524">
    <property type="term" value="F:ATP binding"/>
    <property type="evidence" value="ECO:0007669"/>
    <property type="project" value="UniProtKB-KW"/>
</dbReference>
<dbReference type="GO" id="GO:0004357">
    <property type="term" value="F:glutamate-cysteine ligase activity"/>
    <property type="evidence" value="ECO:0007669"/>
    <property type="project" value="UniProtKB-UniRule"/>
</dbReference>
<dbReference type="GO" id="GO:0046872">
    <property type="term" value="F:metal ion binding"/>
    <property type="evidence" value="ECO:0007669"/>
    <property type="project" value="TreeGrafter"/>
</dbReference>
<dbReference type="GO" id="GO:0006750">
    <property type="term" value="P:glutathione biosynthetic process"/>
    <property type="evidence" value="ECO:0007669"/>
    <property type="project" value="UniProtKB-UniRule"/>
</dbReference>
<dbReference type="FunFam" id="3.30.590.20:FF:000001">
    <property type="entry name" value="Glutamate--cysteine ligase"/>
    <property type="match status" value="1"/>
</dbReference>
<dbReference type="Gene3D" id="3.30.590.20">
    <property type="match status" value="1"/>
</dbReference>
<dbReference type="HAMAP" id="MF_00578">
    <property type="entry name" value="Glu_cys_ligase"/>
    <property type="match status" value="1"/>
</dbReference>
<dbReference type="InterPro" id="IPR014746">
    <property type="entry name" value="Gln_synth/guanido_kin_cat_dom"/>
</dbReference>
<dbReference type="InterPro" id="IPR007370">
    <property type="entry name" value="Glu_cys_ligase"/>
</dbReference>
<dbReference type="InterPro" id="IPR006334">
    <property type="entry name" value="Glut_cys_ligase"/>
</dbReference>
<dbReference type="NCBIfam" id="TIGR01434">
    <property type="entry name" value="glu_cys_ligase"/>
    <property type="match status" value="1"/>
</dbReference>
<dbReference type="PANTHER" id="PTHR38761">
    <property type="entry name" value="GLUTAMATE--CYSTEINE LIGASE"/>
    <property type="match status" value="1"/>
</dbReference>
<dbReference type="PANTHER" id="PTHR38761:SF1">
    <property type="entry name" value="GLUTAMATE--CYSTEINE LIGASE"/>
    <property type="match status" value="1"/>
</dbReference>
<dbReference type="Pfam" id="PF04262">
    <property type="entry name" value="Glu_cys_ligase"/>
    <property type="match status" value="1"/>
</dbReference>
<dbReference type="SUPFAM" id="SSF55931">
    <property type="entry name" value="Glutamine synthetase/guanido kinase"/>
    <property type="match status" value="1"/>
</dbReference>
<gene>
    <name evidence="1" type="primary">gshA</name>
    <name type="ordered locus">SBO_2829</name>
</gene>
<name>GSH1_SHIBS</name>
<proteinExistence type="inferred from homology"/>